<name>DAPAT_ACET2</name>
<keyword id="KW-0032">Aminotransferase</keyword>
<keyword id="KW-0663">Pyridoxal phosphate</keyword>
<keyword id="KW-1185">Reference proteome</keyword>
<keyword id="KW-0808">Transferase</keyword>
<reference key="1">
    <citation type="submission" date="2007-02" db="EMBL/GenBank/DDBJ databases">
        <title>Complete sequence of Clostridium thermocellum ATCC 27405.</title>
        <authorList>
            <consortium name="US DOE Joint Genome Institute"/>
            <person name="Copeland A."/>
            <person name="Lucas S."/>
            <person name="Lapidus A."/>
            <person name="Barry K."/>
            <person name="Detter J.C."/>
            <person name="Glavina del Rio T."/>
            <person name="Hammon N."/>
            <person name="Israni S."/>
            <person name="Dalin E."/>
            <person name="Tice H."/>
            <person name="Pitluck S."/>
            <person name="Chertkov O."/>
            <person name="Brettin T."/>
            <person name="Bruce D."/>
            <person name="Han C."/>
            <person name="Tapia R."/>
            <person name="Gilna P."/>
            <person name="Schmutz J."/>
            <person name="Larimer F."/>
            <person name="Land M."/>
            <person name="Hauser L."/>
            <person name="Kyrpides N."/>
            <person name="Mikhailova N."/>
            <person name="Wu J.H.D."/>
            <person name="Newcomb M."/>
            <person name="Richardson P."/>
        </authorList>
    </citation>
    <scope>NUCLEOTIDE SEQUENCE [LARGE SCALE GENOMIC DNA]</scope>
    <source>
        <strain>ATCC 27405 / DSM 1237 / JCM 9322 / NBRC 103400 / NCIMB 10682 / NRRL B-4536 / VPI 7372</strain>
    </source>
</reference>
<reference key="2">
    <citation type="journal article" date="2008" name="J. Bacteriol.">
        <title>Biochemical and phylogenetic characterization of a novel diaminopimelate biosynthesis pathway in prokaryotes identifies a diverged form of LL-diaminopimelate aminotransferase.</title>
        <authorList>
            <person name="Hudson A.O."/>
            <person name="Gilvarg C."/>
            <person name="Leustek T."/>
        </authorList>
    </citation>
    <scope>FUNCTION AS A LL-DAP AMINOTRANSFERASE</scope>
    <scope>SUBSTRATE SPECIFICITY</scope>
    <scope>PATHWAY</scope>
</reference>
<organism>
    <name type="scientific">Acetivibrio thermocellus (strain ATCC 27405 / DSM 1237 / JCM 9322 / NBRC 103400 / NCIMB 10682 / NRRL B-4536 / VPI 7372)</name>
    <name type="common">Clostridium thermocellum</name>
    <dbReference type="NCBI Taxonomy" id="203119"/>
    <lineage>
        <taxon>Bacteria</taxon>
        <taxon>Bacillati</taxon>
        <taxon>Bacillota</taxon>
        <taxon>Clostridia</taxon>
        <taxon>Eubacteriales</taxon>
        <taxon>Oscillospiraceae</taxon>
        <taxon>Acetivibrio</taxon>
    </lineage>
</organism>
<comment type="function">
    <text evidence="2">Involved in the synthesis of meso-diaminopimelate (m-DAP or DL-DAP), required for both lysine and peptidoglycan biosynthesis. Catalyzes the direct conversion of tetrahydrodipicolinate to LL-diaminopimelate. Can also use m-DAP instead of LL-DAP as the amino-group donor.</text>
</comment>
<comment type="catalytic activity">
    <reaction evidence="1">
        <text>(2S,6S)-2,6-diaminopimelate + 2-oxoglutarate = (S)-2,3,4,5-tetrahydrodipicolinate + L-glutamate + H2O + H(+)</text>
        <dbReference type="Rhea" id="RHEA:23988"/>
        <dbReference type="ChEBI" id="CHEBI:15377"/>
        <dbReference type="ChEBI" id="CHEBI:15378"/>
        <dbReference type="ChEBI" id="CHEBI:16810"/>
        <dbReference type="ChEBI" id="CHEBI:16845"/>
        <dbReference type="ChEBI" id="CHEBI:29985"/>
        <dbReference type="ChEBI" id="CHEBI:57609"/>
        <dbReference type="EC" id="2.6.1.83"/>
    </reaction>
</comment>
<comment type="cofactor">
    <cofactor evidence="1">
        <name>pyridoxal 5'-phosphate</name>
        <dbReference type="ChEBI" id="CHEBI:597326"/>
    </cofactor>
</comment>
<comment type="pathway">
    <text evidence="1 2">Amino-acid biosynthesis; L-lysine biosynthesis via DAP pathway; LL-2,6-diaminopimelate from (S)-tetrahydrodipicolinate (aminotransferase route): step 1/1.</text>
</comment>
<comment type="subunit">
    <text evidence="1">Homodimer.</text>
</comment>
<comment type="similarity">
    <text evidence="1">Belongs to the class-I pyridoxal-phosphate-dependent aminotransferase family. LL-diaminopimelate aminotransferase subfamily.</text>
</comment>
<feature type="chain" id="PRO_0000342227" description="LL-diaminopimelate aminotransferase">
    <location>
        <begin position="1"/>
        <end position="410"/>
    </location>
</feature>
<feature type="binding site" evidence="1">
    <location>
        <position position="15"/>
    </location>
    <ligand>
        <name>substrate</name>
    </ligand>
</feature>
<feature type="binding site" evidence="1">
    <location>
        <position position="42"/>
    </location>
    <ligand>
        <name>substrate</name>
    </ligand>
</feature>
<feature type="binding site" evidence="1">
    <location>
        <position position="72"/>
    </location>
    <ligand>
        <name>pyridoxal 5'-phosphate</name>
        <dbReference type="ChEBI" id="CHEBI:597326"/>
    </ligand>
</feature>
<feature type="binding site" evidence="1">
    <location>
        <begin position="108"/>
        <end position="109"/>
    </location>
    <ligand>
        <name>pyridoxal 5'-phosphate</name>
        <dbReference type="ChEBI" id="CHEBI:597326"/>
    </ligand>
</feature>
<feature type="binding site" evidence="1">
    <location>
        <position position="109"/>
    </location>
    <ligand>
        <name>substrate</name>
    </ligand>
</feature>
<feature type="binding site" evidence="1">
    <location>
        <position position="132"/>
    </location>
    <ligand>
        <name>pyridoxal 5'-phosphate</name>
        <dbReference type="ChEBI" id="CHEBI:597326"/>
    </ligand>
</feature>
<feature type="binding site" evidence="1">
    <location>
        <position position="132"/>
    </location>
    <ligand>
        <name>substrate</name>
    </ligand>
</feature>
<feature type="binding site" evidence="1">
    <location>
        <position position="187"/>
    </location>
    <ligand>
        <name>pyridoxal 5'-phosphate</name>
        <dbReference type="ChEBI" id="CHEBI:597326"/>
    </ligand>
</feature>
<feature type="binding site" evidence="1">
    <location>
        <position position="187"/>
    </location>
    <ligand>
        <name>substrate</name>
    </ligand>
</feature>
<feature type="binding site" evidence="1">
    <location>
        <position position="218"/>
    </location>
    <ligand>
        <name>pyridoxal 5'-phosphate</name>
        <dbReference type="ChEBI" id="CHEBI:597326"/>
    </ligand>
</feature>
<feature type="binding site" evidence="1">
    <location>
        <begin position="246"/>
        <end position="248"/>
    </location>
    <ligand>
        <name>pyridoxal 5'-phosphate</name>
        <dbReference type="ChEBI" id="CHEBI:597326"/>
    </ligand>
</feature>
<feature type="binding site" evidence="1">
    <location>
        <position position="257"/>
    </location>
    <ligand>
        <name>pyridoxal 5'-phosphate</name>
        <dbReference type="ChEBI" id="CHEBI:597326"/>
    </ligand>
</feature>
<feature type="binding site" evidence="1">
    <location>
        <position position="292"/>
    </location>
    <ligand>
        <name>pyridoxal 5'-phosphate</name>
        <dbReference type="ChEBI" id="CHEBI:597326"/>
    </ligand>
</feature>
<feature type="binding site" evidence="1">
    <location>
        <position position="292"/>
    </location>
    <ligand>
        <name>substrate</name>
    </ligand>
</feature>
<feature type="binding site" evidence="1">
    <location>
        <position position="388"/>
    </location>
    <ligand>
        <name>substrate</name>
    </ligand>
</feature>
<feature type="modified residue" description="N6-(pyridoxal phosphate)lysine" evidence="1">
    <location>
        <position position="249"/>
    </location>
</feature>
<sequence>MAFINENYLKLPGSYLFSEIARRVDNFRKENPNAKIIRLGIGDVTKPLAPAVIDALHKAVDEMAKEETFKGYGPEQGYSFLVSKIIEYDYMPRGIRLDEDEVFVSDGAKSDTGNFQEIFGLDNKVAVTDPVYPVYVDSNVMAGRTGKYLANGYFENITYLPCTAENNFIPELPKEKVDIIYLCFPNNPTGMTLSREELKKWVDYARENRAIILFDSAYEAYIREKDVPHSIYEVEGADEVAIEFRSFSKTAGFTGTRCAYTVVPKKVVAYTKNGEAHQLNSLWNRRQTTKFNGVPYIIQRAAAAVYTPEGQKQTKETIDYYMENAKIIKQGLEDIGLTVFGGVNAPYIWLKTPDGISSWEFFDIMLKEINVVGTPGSGFGPSGEGYFRLTAFGSRENTLEAVERFKNLKF</sequence>
<evidence type="ECO:0000255" key="1">
    <source>
        <dbReference type="HAMAP-Rule" id="MF_01642"/>
    </source>
</evidence>
<evidence type="ECO:0000269" key="2">
    <source>
    </source>
</evidence>
<evidence type="ECO:0000303" key="3">
    <source>
    </source>
</evidence>
<protein>
    <recommendedName>
        <fullName evidence="1 3">LL-diaminopimelate aminotransferase</fullName>
        <shortName evidence="1 3">DAP-AT</shortName>
        <shortName evidence="1 3">DAP-aminotransferase</shortName>
        <shortName evidence="1 3">LL-DAP-aminotransferase</shortName>
        <ecNumber evidence="1">2.6.1.83</ecNumber>
    </recommendedName>
</protein>
<gene>
    <name evidence="1" type="primary">dapL</name>
    <name type="ordered locus">Cthe_3101</name>
</gene>
<accession>A3DK17</accession>
<proteinExistence type="evidence at protein level"/>
<dbReference type="EC" id="2.6.1.83" evidence="1"/>
<dbReference type="EMBL" id="CP000568">
    <property type="protein sequence ID" value="ABN54296.1"/>
    <property type="molecule type" value="Genomic_DNA"/>
</dbReference>
<dbReference type="RefSeq" id="WP_003511604.1">
    <property type="nucleotide sequence ID" value="NC_009012.1"/>
</dbReference>
<dbReference type="SMR" id="A3DK17"/>
<dbReference type="STRING" id="203119.Cthe_3101"/>
<dbReference type="GeneID" id="35803380"/>
<dbReference type="KEGG" id="cth:Cthe_3101"/>
<dbReference type="eggNOG" id="COG0436">
    <property type="taxonomic scope" value="Bacteria"/>
</dbReference>
<dbReference type="HOGENOM" id="CLU_051433_0_0_9"/>
<dbReference type="OrthoDB" id="9813612at2"/>
<dbReference type="UniPathway" id="UPA00034">
    <property type="reaction ID" value="UER00466"/>
</dbReference>
<dbReference type="Proteomes" id="UP000002145">
    <property type="component" value="Chromosome"/>
</dbReference>
<dbReference type="GO" id="GO:0010285">
    <property type="term" value="F:L,L-diaminopimelate aminotransferase activity"/>
    <property type="evidence" value="ECO:0007669"/>
    <property type="project" value="UniProtKB-UniRule"/>
</dbReference>
<dbReference type="GO" id="GO:0030170">
    <property type="term" value="F:pyridoxal phosphate binding"/>
    <property type="evidence" value="ECO:0007669"/>
    <property type="project" value="UniProtKB-UniRule"/>
</dbReference>
<dbReference type="GO" id="GO:0033362">
    <property type="term" value="P:lysine biosynthetic process via diaminopimelate, diaminopimelate-aminotransferase pathway"/>
    <property type="evidence" value="ECO:0007669"/>
    <property type="project" value="UniProtKB-UniRule"/>
</dbReference>
<dbReference type="CDD" id="cd00609">
    <property type="entry name" value="AAT_like"/>
    <property type="match status" value="1"/>
</dbReference>
<dbReference type="FunFam" id="3.40.640.10:FF:000099">
    <property type="entry name" value="LL-diaminopimelate aminotransferase, chloroplastic"/>
    <property type="match status" value="1"/>
</dbReference>
<dbReference type="Gene3D" id="3.90.1150.10">
    <property type="entry name" value="Aspartate Aminotransferase, domain 1"/>
    <property type="match status" value="1"/>
</dbReference>
<dbReference type="Gene3D" id="3.40.640.10">
    <property type="entry name" value="Type I PLP-dependent aspartate aminotransferase-like (Major domain)"/>
    <property type="match status" value="1"/>
</dbReference>
<dbReference type="HAMAP" id="MF_01642">
    <property type="entry name" value="DapL_aminotrans_1"/>
    <property type="match status" value="1"/>
</dbReference>
<dbReference type="InterPro" id="IPR004839">
    <property type="entry name" value="Aminotransferase_I/II_large"/>
</dbReference>
<dbReference type="InterPro" id="IPR019942">
    <property type="entry name" value="DapL/ALD1"/>
</dbReference>
<dbReference type="InterPro" id="IPR015424">
    <property type="entry name" value="PyrdxlP-dep_Trfase"/>
</dbReference>
<dbReference type="InterPro" id="IPR015421">
    <property type="entry name" value="PyrdxlP-dep_Trfase_major"/>
</dbReference>
<dbReference type="InterPro" id="IPR015422">
    <property type="entry name" value="PyrdxlP-dep_Trfase_small"/>
</dbReference>
<dbReference type="NCBIfam" id="TIGR03542">
    <property type="entry name" value="DAPAT_plant"/>
    <property type="match status" value="1"/>
</dbReference>
<dbReference type="PANTHER" id="PTHR43144">
    <property type="entry name" value="AMINOTRANSFERASE"/>
    <property type="match status" value="1"/>
</dbReference>
<dbReference type="Pfam" id="PF00155">
    <property type="entry name" value="Aminotran_1_2"/>
    <property type="match status" value="1"/>
</dbReference>
<dbReference type="SUPFAM" id="SSF53383">
    <property type="entry name" value="PLP-dependent transferases"/>
    <property type="match status" value="1"/>
</dbReference>